<reference key="1">
    <citation type="journal article" date="2009" name="J. Bacteriol.">
        <title>Genome sequence of Azotobacter vinelandii, an obligate aerobe specialized to support diverse anaerobic metabolic processes.</title>
        <authorList>
            <person name="Setubal J.C."/>
            <person name="Dos Santos P."/>
            <person name="Goldman B.S."/>
            <person name="Ertesvaag H."/>
            <person name="Espin G."/>
            <person name="Rubio L.M."/>
            <person name="Valla S."/>
            <person name="Almeida N.F."/>
            <person name="Balasubramanian D."/>
            <person name="Cromes L."/>
            <person name="Curatti L."/>
            <person name="Du Z."/>
            <person name="Godsy E."/>
            <person name="Goodner B."/>
            <person name="Hellner-Burris K."/>
            <person name="Hernandez J.A."/>
            <person name="Houmiel K."/>
            <person name="Imperial J."/>
            <person name="Kennedy C."/>
            <person name="Larson T.J."/>
            <person name="Latreille P."/>
            <person name="Ligon L.S."/>
            <person name="Lu J."/>
            <person name="Maerk M."/>
            <person name="Miller N.M."/>
            <person name="Norton S."/>
            <person name="O'Carroll I.P."/>
            <person name="Paulsen I."/>
            <person name="Raulfs E.C."/>
            <person name="Roemer R."/>
            <person name="Rosser J."/>
            <person name="Segura D."/>
            <person name="Slater S."/>
            <person name="Stricklin S.L."/>
            <person name="Studholme D.J."/>
            <person name="Sun J."/>
            <person name="Viana C.J."/>
            <person name="Wallin E."/>
            <person name="Wang B."/>
            <person name="Wheeler C."/>
            <person name="Zhu H."/>
            <person name="Dean D.R."/>
            <person name="Dixon R."/>
            <person name="Wood D."/>
        </authorList>
    </citation>
    <scope>NUCLEOTIDE SEQUENCE [LARGE SCALE GENOMIC DNA]</scope>
    <source>
        <strain>DJ / ATCC BAA-1303</strain>
    </source>
</reference>
<protein>
    <recommendedName>
        <fullName evidence="1">Chaperone protein HscA homolog</fullName>
    </recommendedName>
</protein>
<proteinExistence type="inferred from homology"/>
<evidence type="ECO:0000255" key="1">
    <source>
        <dbReference type="HAMAP-Rule" id="MF_00679"/>
    </source>
</evidence>
<gene>
    <name evidence="1" type="primary">hscA</name>
    <name type="ordered locus">Avin_40360</name>
</gene>
<keyword id="KW-0067">ATP-binding</keyword>
<keyword id="KW-0143">Chaperone</keyword>
<keyword id="KW-0547">Nucleotide-binding</keyword>
<comment type="function">
    <text evidence="1">Chaperone involved in the maturation of iron-sulfur cluster-containing proteins. Has a low intrinsic ATPase activity which is markedly stimulated by HscB.</text>
</comment>
<comment type="similarity">
    <text evidence="1">Belongs to the heat shock protein 70 family.</text>
</comment>
<accession>C1DE64</accession>
<dbReference type="EMBL" id="CP001157">
    <property type="protein sequence ID" value="ACO80172.1"/>
    <property type="molecule type" value="Genomic_DNA"/>
</dbReference>
<dbReference type="RefSeq" id="WP_012702547.1">
    <property type="nucleotide sequence ID" value="NC_012560.1"/>
</dbReference>
<dbReference type="SMR" id="C1DE64"/>
<dbReference type="STRING" id="322710.Avin_40360"/>
<dbReference type="EnsemblBacteria" id="ACO80172">
    <property type="protein sequence ID" value="ACO80172"/>
    <property type="gene ID" value="Avin_40360"/>
</dbReference>
<dbReference type="GeneID" id="88186979"/>
<dbReference type="KEGG" id="avn:Avin_40360"/>
<dbReference type="eggNOG" id="COG0443">
    <property type="taxonomic scope" value="Bacteria"/>
</dbReference>
<dbReference type="HOGENOM" id="CLU_005965_2_3_6"/>
<dbReference type="OrthoDB" id="9766019at2"/>
<dbReference type="Proteomes" id="UP000002424">
    <property type="component" value="Chromosome"/>
</dbReference>
<dbReference type="GO" id="GO:0005524">
    <property type="term" value="F:ATP binding"/>
    <property type="evidence" value="ECO:0007669"/>
    <property type="project" value="UniProtKB-KW"/>
</dbReference>
<dbReference type="GO" id="GO:0016887">
    <property type="term" value="F:ATP hydrolysis activity"/>
    <property type="evidence" value="ECO:0007669"/>
    <property type="project" value="UniProtKB-UniRule"/>
</dbReference>
<dbReference type="GO" id="GO:0140662">
    <property type="term" value="F:ATP-dependent protein folding chaperone"/>
    <property type="evidence" value="ECO:0007669"/>
    <property type="project" value="InterPro"/>
</dbReference>
<dbReference type="GO" id="GO:0051082">
    <property type="term" value="F:unfolded protein binding"/>
    <property type="evidence" value="ECO:0007669"/>
    <property type="project" value="InterPro"/>
</dbReference>
<dbReference type="GO" id="GO:0016226">
    <property type="term" value="P:iron-sulfur cluster assembly"/>
    <property type="evidence" value="ECO:0007669"/>
    <property type="project" value="InterPro"/>
</dbReference>
<dbReference type="CDD" id="cd10236">
    <property type="entry name" value="ASKHA_NBD_HSP70_HscA"/>
    <property type="match status" value="1"/>
</dbReference>
<dbReference type="FunFam" id="3.30.420.40:FF:000046">
    <property type="entry name" value="Chaperone protein HscA"/>
    <property type="match status" value="1"/>
</dbReference>
<dbReference type="FunFam" id="2.60.34.10:FF:000005">
    <property type="entry name" value="Chaperone protein HscA homolog"/>
    <property type="match status" value="1"/>
</dbReference>
<dbReference type="Gene3D" id="1.20.1270.10">
    <property type="match status" value="1"/>
</dbReference>
<dbReference type="Gene3D" id="3.30.420.40">
    <property type="match status" value="2"/>
</dbReference>
<dbReference type="Gene3D" id="3.90.640.10">
    <property type="entry name" value="Actin, Chain A, domain 4"/>
    <property type="match status" value="1"/>
</dbReference>
<dbReference type="Gene3D" id="2.60.34.10">
    <property type="entry name" value="Substrate Binding Domain Of DNAk, Chain A, domain 1"/>
    <property type="match status" value="1"/>
</dbReference>
<dbReference type="HAMAP" id="MF_00679">
    <property type="entry name" value="HscA"/>
    <property type="match status" value="1"/>
</dbReference>
<dbReference type="InterPro" id="IPR043129">
    <property type="entry name" value="ATPase_NBD"/>
</dbReference>
<dbReference type="InterPro" id="IPR018181">
    <property type="entry name" value="Heat_shock_70_CS"/>
</dbReference>
<dbReference type="InterPro" id="IPR042039">
    <property type="entry name" value="HscA_NBD"/>
</dbReference>
<dbReference type="InterPro" id="IPR029048">
    <property type="entry name" value="HSP70_C_sf"/>
</dbReference>
<dbReference type="InterPro" id="IPR029047">
    <property type="entry name" value="HSP70_peptide-bd_sf"/>
</dbReference>
<dbReference type="InterPro" id="IPR013126">
    <property type="entry name" value="Hsp_70_fam"/>
</dbReference>
<dbReference type="InterPro" id="IPR010236">
    <property type="entry name" value="ISC_FeS_clus_asmbl_HscA"/>
</dbReference>
<dbReference type="NCBIfam" id="TIGR01991">
    <property type="entry name" value="HscA"/>
    <property type="match status" value="1"/>
</dbReference>
<dbReference type="NCBIfam" id="NF003520">
    <property type="entry name" value="PRK05183.1"/>
    <property type="match status" value="1"/>
</dbReference>
<dbReference type="PANTHER" id="PTHR19375">
    <property type="entry name" value="HEAT SHOCK PROTEIN 70KDA"/>
    <property type="match status" value="1"/>
</dbReference>
<dbReference type="Pfam" id="PF00012">
    <property type="entry name" value="HSP70"/>
    <property type="match status" value="1"/>
</dbReference>
<dbReference type="PRINTS" id="PR00301">
    <property type="entry name" value="HEATSHOCK70"/>
</dbReference>
<dbReference type="SUPFAM" id="SSF53067">
    <property type="entry name" value="Actin-like ATPase domain"/>
    <property type="match status" value="2"/>
</dbReference>
<dbReference type="SUPFAM" id="SSF100934">
    <property type="entry name" value="Heat shock protein 70kD (HSP70), C-terminal subdomain"/>
    <property type="match status" value="1"/>
</dbReference>
<dbReference type="SUPFAM" id="SSF100920">
    <property type="entry name" value="Heat shock protein 70kD (HSP70), peptide-binding domain"/>
    <property type="match status" value="1"/>
</dbReference>
<dbReference type="PROSITE" id="PS00297">
    <property type="entry name" value="HSP70_1"/>
    <property type="match status" value="1"/>
</dbReference>
<dbReference type="PROSITE" id="PS00329">
    <property type="entry name" value="HSP70_2"/>
    <property type="match status" value="1"/>
</dbReference>
<dbReference type="PROSITE" id="PS01036">
    <property type="entry name" value="HSP70_3"/>
    <property type="match status" value="1"/>
</dbReference>
<sequence length="621" mass="66248">MALLQIAEPGQSPQPHQRRLAVGIDLGTTNSLVATLRSGLAESLKDTEGETILPSAVRYLPDGRVEVGRAAKAAAAVDPLNTVLSVKRLMGRGIADVKLLGEQLPYRFAEGESHMPFIETVQGPKSPVEVSAEILRVLRRRAEEALGGELVGAVITVPAYFDEAQRQATKDAARLAGLDVLRLLNEPTAAAVAYGLDRGAEGVVAIYDLGGGTFDISILRLTRGVFEVLATGGDSALGGDDFDHAIANWIVEQAGLSADLDPGVQRHLLQLACAAKEALSDSGSVALAYGPWQGELSRERFEALIEPLVARSLKACRRALRDAGIEPQEIAAVVMVGGSTRVPRVRRAAAELFDRQPLTDIDPDQVVAIGAALQADTLAGNGRDGEELLLLDVNPLSLGLETMGRLMEKVIPRNTTLPVARAQEFTTYKDGQTAMLIHVLQGERELVKDCRSLARFELRGIPPMVAGAAKIRVTFQVDADGLLNVSARELGSGIEASVQVKPSYGLTDGEIARMLKDSFEYAGGDKAARALREQQVEAQRLLEAVQAALEADGEALLSPAERAAIEAQMQALRGVLDGPDAAVIETHVRHLTQVTDAFAARRLDASVKAALSGRRLNEIEE</sequence>
<feature type="chain" id="PRO_1000212527" description="Chaperone protein HscA homolog">
    <location>
        <begin position="1"/>
        <end position="621"/>
    </location>
</feature>
<name>HSCA_AZOVD</name>
<organism>
    <name type="scientific">Azotobacter vinelandii (strain DJ / ATCC BAA-1303)</name>
    <dbReference type="NCBI Taxonomy" id="322710"/>
    <lineage>
        <taxon>Bacteria</taxon>
        <taxon>Pseudomonadati</taxon>
        <taxon>Pseudomonadota</taxon>
        <taxon>Gammaproteobacteria</taxon>
        <taxon>Pseudomonadales</taxon>
        <taxon>Pseudomonadaceae</taxon>
        <taxon>Azotobacter</taxon>
    </lineage>
</organism>